<accession>B6SCF6</accession>
<reference key="1">
    <citation type="journal article" date="2008" name="Plant Physiol.">
        <title>Terpene biosynthesis in glandular trichomes of hop.</title>
        <authorList>
            <person name="Wang G."/>
            <person name="Tian L."/>
            <person name="Aziz N."/>
            <person name="Broun P."/>
            <person name="Dai X."/>
            <person name="He J."/>
            <person name="King A."/>
            <person name="Zhao P.X."/>
            <person name="Dixon R.A."/>
        </authorList>
    </citation>
    <scope>NUCLEOTIDE SEQUENCE [MRNA]</scope>
    <scope>FUNCTION</scope>
    <scope>CATALYTIC ACTIVITY</scope>
    <scope>SUBSTRATE SPECIFICITY</scope>
    <scope>BIOPHYSICOCHEMICAL PROPERTIES</scope>
    <scope>TISSUE SPECIFICITY</scope>
    <source>
        <tissue>Lupulin gland</tissue>
    </source>
</reference>
<organism evidence="5">
    <name type="scientific">Humulus lupulus</name>
    <name type="common">European hop</name>
    <dbReference type="NCBI Taxonomy" id="3486"/>
    <lineage>
        <taxon>Eukaryota</taxon>
        <taxon>Viridiplantae</taxon>
        <taxon>Streptophyta</taxon>
        <taxon>Embryophyta</taxon>
        <taxon>Tracheophyta</taxon>
        <taxon>Spermatophyta</taxon>
        <taxon>Magnoliopsida</taxon>
        <taxon>eudicotyledons</taxon>
        <taxon>Gunneridae</taxon>
        <taxon>Pentapetalae</taxon>
        <taxon>rosids</taxon>
        <taxon>fabids</taxon>
        <taxon>Rosales</taxon>
        <taxon>Cannabaceae</taxon>
        <taxon>Humulus</taxon>
    </lineage>
</organism>
<dbReference type="EC" id="4.2.3.23" evidence="2"/>
<dbReference type="EMBL" id="EU760351">
    <property type="protein sequence ID" value="ACI32640.1"/>
    <property type="molecule type" value="mRNA"/>
</dbReference>
<dbReference type="SMR" id="B6SCF6"/>
<dbReference type="UniPathway" id="UPA00213"/>
<dbReference type="GO" id="GO:0034005">
    <property type="term" value="F:germacrene-A synthase activity"/>
    <property type="evidence" value="ECO:0007669"/>
    <property type="project" value="UniProtKB-EC"/>
</dbReference>
<dbReference type="GO" id="GO:0000287">
    <property type="term" value="F:magnesium ion binding"/>
    <property type="evidence" value="ECO:0007669"/>
    <property type="project" value="InterPro"/>
</dbReference>
<dbReference type="GO" id="GO:0016102">
    <property type="term" value="P:diterpenoid biosynthetic process"/>
    <property type="evidence" value="ECO:0007669"/>
    <property type="project" value="InterPro"/>
</dbReference>
<dbReference type="CDD" id="cd00684">
    <property type="entry name" value="Terpene_cyclase_plant_C1"/>
    <property type="match status" value="1"/>
</dbReference>
<dbReference type="FunFam" id="1.10.600.10:FF:000007">
    <property type="entry name" value="Isoprene synthase, chloroplastic"/>
    <property type="match status" value="1"/>
</dbReference>
<dbReference type="FunFam" id="1.50.10.130:FF:000001">
    <property type="entry name" value="Isoprene synthase, chloroplastic"/>
    <property type="match status" value="1"/>
</dbReference>
<dbReference type="Gene3D" id="1.10.600.10">
    <property type="entry name" value="Farnesyl Diphosphate Synthase"/>
    <property type="match status" value="1"/>
</dbReference>
<dbReference type="Gene3D" id="1.50.10.130">
    <property type="entry name" value="Terpene synthase, N-terminal domain"/>
    <property type="match status" value="1"/>
</dbReference>
<dbReference type="InterPro" id="IPR008949">
    <property type="entry name" value="Isoprenoid_synthase_dom_sf"/>
</dbReference>
<dbReference type="InterPro" id="IPR034741">
    <property type="entry name" value="Terpene_cyclase-like_1_C"/>
</dbReference>
<dbReference type="InterPro" id="IPR044814">
    <property type="entry name" value="Terpene_cyclase_plant_C1"/>
</dbReference>
<dbReference type="InterPro" id="IPR001906">
    <property type="entry name" value="Terpene_synth_N"/>
</dbReference>
<dbReference type="InterPro" id="IPR036965">
    <property type="entry name" value="Terpene_synth_N_sf"/>
</dbReference>
<dbReference type="InterPro" id="IPR050148">
    <property type="entry name" value="Terpene_synthase-like"/>
</dbReference>
<dbReference type="InterPro" id="IPR005630">
    <property type="entry name" value="Terpene_synthase_metal-bd"/>
</dbReference>
<dbReference type="InterPro" id="IPR008930">
    <property type="entry name" value="Terpenoid_cyclase/PrenylTrfase"/>
</dbReference>
<dbReference type="PANTHER" id="PTHR31225:SF93">
    <property type="entry name" value="ALPHA-HUMULENE_(-)-(E)-BETA-CARYOPHYLLENE SYNTHASE"/>
    <property type="match status" value="1"/>
</dbReference>
<dbReference type="PANTHER" id="PTHR31225">
    <property type="entry name" value="OS04G0344100 PROTEIN-RELATED"/>
    <property type="match status" value="1"/>
</dbReference>
<dbReference type="Pfam" id="PF01397">
    <property type="entry name" value="Terpene_synth"/>
    <property type="match status" value="1"/>
</dbReference>
<dbReference type="Pfam" id="PF03936">
    <property type="entry name" value="Terpene_synth_C"/>
    <property type="match status" value="1"/>
</dbReference>
<dbReference type="SFLD" id="SFLDS00005">
    <property type="entry name" value="Isoprenoid_Synthase_Type_I"/>
    <property type="match status" value="1"/>
</dbReference>
<dbReference type="SFLD" id="SFLDG01019">
    <property type="entry name" value="Terpene_Cyclase_Like_1_C_Termi"/>
    <property type="match status" value="1"/>
</dbReference>
<dbReference type="SUPFAM" id="SSF48239">
    <property type="entry name" value="Terpenoid cyclases/Protein prenyltransferases"/>
    <property type="match status" value="1"/>
</dbReference>
<dbReference type="SUPFAM" id="SSF48576">
    <property type="entry name" value="Terpenoid synthases"/>
    <property type="match status" value="1"/>
</dbReference>
<comment type="function">
    <text evidence="2">Sesquiterpene synthase that catalyzes the formation of germacrene A. Can use farnesyl diphosphate as substrate, but not geranyl diphosphate or geranylgeranyl diphosphate. Beta-elemene, the initially measured product in the assay, is derived nonenzymatically from germacrene A.</text>
</comment>
<comment type="catalytic activity">
    <reaction evidence="2">
        <text>(2E,6E)-farnesyl diphosphate = (+)-(R)-germacrene A + diphosphate</text>
        <dbReference type="Rhea" id="RHEA:12516"/>
        <dbReference type="ChEBI" id="CHEBI:33019"/>
        <dbReference type="ChEBI" id="CHEBI:41595"/>
        <dbReference type="ChEBI" id="CHEBI:175763"/>
        <dbReference type="EC" id="4.2.3.23"/>
    </reaction>
</comment>
<comment type="cofactor">
    <cofactor evidence="1">
        <name>Mg(2+)</name>
        <dbReference type="ChEBI" id="CHEBI:18420"/>
    </cofactor>
</comment>
<comment type="biophysicochemical properties">
    <kinetics>
        <KM evidence="2">0.49 uM for (2E,6E)-farnesyl diphosphate</KM>
    </kinetics>
</comment>
<comment type="pathway">
    <text>Secondary metabolite biosynthesis; terpenoid biosynthesis.</text>
</comment>
<comment type="tissue specificity">
    <text evidence="2">Expressed in young leaves. Detected in trichomes and cones.</text>
</comment>
<comment type="domain">
    <text evidence="1">The Asp-Asp-Xaa-Xaa-Asp/Glu (DDXXD/E) motif is important for the catalytic activity, presumably through binding to Mg(2+).</text>
</comment>
<comment type="similarity">
    <text evidence="4">Belongs to the terpene synthase family. Tpsa subfamily.</text>
</comment>
<sequence length="563" mass="65951">MSTQIFASSSQNEKIHKILRPTKKLQPSVWGERFLHYNISEQELRYKQQQVEELKAVVKKEIFGESAYDVSHQLKLINVVERLGLSYHFESEIENELESIYNKSVDQNYILKDENLHDASLRFRLLRQHGFRVSSADIFEKFKDEDGNFKECLVSDTIGLLSLYEASHLSCVGENILDEALDFTTTHLTEFLANKKEHDDPLSKEISQALERPLRKSLERLAARHFISIYANETSHNKVLLQLAKLDFNLLQSIHKKELSEISRWWKESDFVHKFPFARDRIVELYLWILAVYYEPQYYLARNILTKTIALASIADDIYDEYGTIEELELLTEAVERWDINFIDKLNPEYLQTFYKELLNSYEEFEQALSKEETYRVHYAKERFKELLRSSLEVAWWLKEGRVPSFDEYLKISLINCGYHMLIVSSLIGMKGSIVTKEVFEWLSIDRKIVRASVTICRLMDDIAEYKFEQEKNEEPSAVECYMKQYGVSEEEAYDELNKRVVNAWKEINEELLKPTGVASPILVRALNFSKFMDLFYKNGDGYTQVGKVTKHSVAALLIHPIP</sequence>
<keyword id="KW-0456">Lyase</keyword>
<keyword id="KW-0460">Magnesium</keyword>
<keyword id="KW-0479">Metal-binding</keyword>
<proteinExistence type="evidence at protein level"/>
<protein>
    <recommendedName>
        <fullName evidence="4">Germacrene-A synthase</fullName>
        <ecNumber evidence="2">4.2.3.23</ecNumber>
    </recommendedName>
    <alternativeName>
        <fullName evidence="3">Sesquiterpene synthase STS2</fullName>
        <shortName evidence="3">HlSTS2</shortName>
    </alternativeName>
</protein>
<evidence type="ECO:0000250" key="1">
    <source>
        <dbReference type="UniProtKB" id="Q40577"/>
    </source>
</evidence>
<evidence type="ECO:0000269" key="2">
    <source>
    </source>
</evidence>
<evidence type="ECO:0000303" key="3">
    <source>
    </source>
</evidence>
<evidence type="ECO:0000305" key="4"/>
<evidence type="ECO:0000312" key="5">
    <source>
        <dbReference type="EMBL" id="ACI32640.1"/>
    </source>
</evidence>
<feature type="chain" id="PRO_0000439239" description="Germacrene-A synthase">
    <location>
        <begin position="1"/>
        <end position="563"/>
    </location>
</feature>
<feature type="short sequence motif" description="DDXXD motif" evidence="4">
    <location>
        <begin position="316"/>
        <end position="320"/>
    </location>
</feature>
<feature type="binding site" evidence="1">
    <location>
        <position position="316"/>
    </location>
    <ligand>
        <name>Mg(2+)</name>
        <dbReference type="ChEBI" id="CHEBI:18420"/>
        <label>1</label>
    </ligand>
</feature>
<feature type="binding site" evidence="1">
    <location>
        <position position="316"/>
    </location>
    <ligand>
        <name>Mg(2+)</name>
        <dbReference type="ChEBI" id="CHEBI:18420"/>
        <label>2</label>
    </ligand>
</feature>
<feature type="binding site" evidence="1">
    <location>
        <position position="320"/>
    </location>
    <ligand>
        <name>Mg(2+)</name>
        <dbReference type="ChEBI" id="CHEBI:18420"/>
        <label>1</label>
    </ligand>
</feature>
<feature type="binding site" evidence="1">
    <location>
        <position position="320"/>
    </location>
    <ligand>
        <name>Mg(2+)</name>
        <dbReference type="ChEBI" id="CHEBI:18420"/>
        <label>2</label>
    </ligand>
</feature>
<feature type="binding site" evidence="1">
    <location>
        <position position="461"/>
    </location>
    <ligand>
        <name>Mg(2+)</name>
        <dbReference type="ChEBI" id="CHEBI:18420"/>
        <label>3</label>
    </ligand>
</feature>
<feature type="binding site" evidence="1">
    <location>
        <position position="469"/>
    </location>
    <ligand>
        <name>Mg(2+)</name>
        <dbReference type="ChEBI" id="CHEBI:18420"/>
        <label>3</label>
    </ligand>
</feature>
<name>STS2_HUMLU</name>